<name>MTND_GLUDA</name>
<evidence type="ECO:0000255" key="1">
    <source>
        <dbReference type="HAMAP-Rule" id="MF_01682"/>
    </source>
</evidence>
<proteinExistence type="inferred from homology"/>
<accession>A9H8G4</accession>
<sequence length="179" mass="19647">MSHLTVYRDDDPDDIVLRTDDAAVIADALRGIGARFERWDSPVVPPLDATPDAVLNTYRPYLDELMGETGAGSADVVRINAATPNLTALRDKFLSEHTHSEDEVRFFVHGSGNFVLHVDGRVYDVCCTAGDLISVPRGTPHWFDAGLSPDVVALRVFTDTTGWIADYTGDDIARRFPVS</sequence>
<gene>
    <name evidence="1" type="primary">mtnD</name>
    <name type="ordered locus">GDI0586</name>
    <name type="ordered locus">Gdia_1414</name>
</gene>
<reference key="1">
    <citation type="journal article" date="2009" name="BMC Genomics">
        <title>Complete genome sequence of the sugarcane nitrogen-fixing endophyte Gluconacetobacter diazotrophicus Pal5.</title>
        <authorList>
            <person name="Bertalan M."/>
            <person name="Albano R."/>
            <person name="de Padua V."/>
            <person name="Rouws L."/>
            <person name="Rojas C."/>
            <person name="Hemerly A."/>
            <person name="Teixeira K."/>
            <person name="Schwab S."/>
            <person name="Araujo J."/>
            <person name="Oliveira A."/>
            <person name="Franca L."/>
            <person name="Magalhaes V."/>
            <person name="Alqueres S."/>
            <person name="Cardoso A."/>
            <person name="Almeida W."/>
            <person name="Loureiro M.M."/>
            <person name="Nogueira E."/>
            <person name="Cidade D."/>
            <person name="Oliveira D."/>
            <person name="Simao T."/>
            <person name="Macedo J."/>
            <person name="Valadao A."/>
            <person name="Dreschsel M."/>
            <person name="Freitas F."/>
            <person name="Vidal M."/>
            <person name="Guedes H."/>
            <person name="Rodrigues E."/>
            <person name="Meneses C."/>
            <person name="Brioso P."/>
            <person name="Pozzer L."/>
            <person name="Figueiredo D."/>
            <person name="Montano H."/>
            <person name="Junior J."/>
            <person name="de Souza Filho G."/>
            <person name="Martin Quintana Flores V."/>
            <person name="Ferreira B."/>
            <person name="Branco A."/>
            <person name="Gonzalez P."/>
            <person name="Guillobel H."/>
            <person name="Lemos M."/>
            <person name="Seibel L."/>
            <person name="Macedo J."/>
            <person name="Alves-Ferreira M."/>
            <person name="Sachetto-Martins G."/>
            <person name="Coelho A."/>
            <person name="Santos E."/>
            <person name="Amaral G."/>
            <person name="Neves A."/>
            <person name="Pacheco A.B."/>
            <person name="Carvalho D."/>
            <person name="Lery L."/>
            <person name="Bisch P."/>
            <person name="Rossle S.C."/>
            <person name="Urmenyi T."/>
            <person name="Rael Pereira A."/>
            <person name="Silva R."/>
            <person name="Rondinelli E."/>
            <person name="von Kruger W."/>
            <person name="Martins O."/>
            <person name="Baldani J.I."/>
            <person name="Ferreira P.C."/>
        </authorList>
    </citation>
    <scope>NUCLEOTIDE SEQUENCE [LARGE SCALE GENOMIC DNA]</scope>
    <source>
        <strain>ATCC 49037 / DSM 5601 / CCUG 37298 / CIP 103539 / LMG 7603 / PAl5</strain>
    </source>
</reference>
<reference key="2">
    <citation type="journal article" date="2010" name="Stand. Genomic Sci.">
        <title>Two genome sequences of the same bacterial strain, Gluconacetobacter diazotrophicus PAl 5, suggest a new standard in genome sequence submission.</title>
        <authorList>
            <person name="Giongo A."/>
            <person name="Tyler H.L."/>
            <person name="Zipperer U.N."/>
            <person name="Triplett E.W."/>
        </authorList>
    </citation>
    <scope>NUCLEOTIDE SEQUENCE [LARGE SCALE GENOMIC DNA]</scope>
    <source>
        <strain>ATCC 49037 / DSM 5601 / CCUG 37298 / CIP 103539 / LMG 7603 / PAl5</strain>
    </source>
</reference>
<comment type="function">
    <text evidence="1">Catalyzes 2 different reactions between oxygen and the acireductone 1,2-dihydroxy-3-keto-5-methylthiopentene (DHK-MTPene) depending upon the metal bound in the active site. Fe-containing acireductone dioxygenase (Fe-ARD) produces formate and 2-keto-4-methylthiobutyrate (KMTB), the alpha-ketoacid precursor of methionine in the methionine recycle pathway. Ni-containing acireductone dioxygenase (Ni-ARD) produces methylthiopropionate, carbon monoxide and formate, and does not lie on the methionine recycle pathway.</text>
</comment>
<comment type="catalytic activity">
    <reaction evidence="1">
        <text>1,2-dihydroxy-5-(methylsulfanyl)pent-1-en-3-one + O2 = 3-(methylsulfanyl)propanoate + CO + formate + 2 H(+)</text>
        <dbReference type="Rhea" id="RHEA:14161"/>
        <dbReference type="ChEBI" id="CHEBI:15378"/>
        <dbReference type="ChEBI" id="CHEBI:15379"/>
        <dbReference type="ChEBI" id="CHEBI:15740"/>
        <dbReference type="ChEBI" id="CHEBI:17245"/>
        <dbReference type="ChEBI" id="CHEBI:49016"/>
        <dbReference type="ChEBI" id="CHEBI:49252"/>
        <dbReference type="EC" id="1.13.11.53"/>
    </reaction>
</comment>
<comment type="catalytic activity">
    <reaction evidence="1">
        <text>1,2-dihydroxy-5-(methylsulfanyl)pent-1-en-3-one + O2 = 4-methylsulfanyl-2-oxobutanoate + formate + 2 H(+)</text>
        <dbReference type="Rhea" id="RHEA:24504"/>
        <dbReference type="ChEBI" id="CHEBI:15378"/>
        <dbReference type="ChEBI" id="CHEBI:15379"/>
        <dbReference type="ChEBI" id="CHEBI:15740"/>
        <dbReference type="ChEBI" id="CHEBI:16723"/>
        <dbReference type="ChEBI" id="CHEBI:49252"/>
        <dbReference type="EC" id="1.13.11.54"/>
    </reaction>
</comment>
<comment type="cofactor">
    <cofactor evidence="1">
        <name>Fe(2+)</name>
        <dbReference type="ChEBI" id="CHEBI:29033"/>
    </cofactor>
    <text evidence="1">Binds 1 Fe(2+) cation per monomer.</text>
</comment>
<comment type="cofactor">
    <cofactor evidence="1">
        <name>Ni(2+)</name>
        <dbReference type="ChEBI" id="CHEBI:49786"/>
    </cofactor>
    <text evidence="1">Binds 1 nickel ion per monomer.</text>
</comment>
<comment type="pathway">
    <text evidence="1">Amino-acid biosynthesis; L-methionine biosynthesis via salvage pathway; L-methionine from S-methyl-5-thio-alpha-D-ribose 1-phosphate: step 5/6.</text>
</comment>
<comment type="subunit">
    <text evidence="1">Monomer.</text>
</comment>
<comment type="similarity">
    <text evidence="1">Belongs to the acireductone dioxygenase (ARD) family.</text>
</comment>
<protein>
    <recommendedName>
        <fullName evidence="1">Acireductone dioxygenase</fullName>
    </recommendedName>
    <alternativeName>
        <fullName evidence="1">1,2-dihydroxy-3-keto-5-methylthiopentene dioxygenase</fullName>
        <shortName evidence="1">DHK-MTPene dioxygenase</shortName>
    </alternativeName>
    <alternativeName>
        <fullName evidence="1">Acireductone dioxygenase (Fe(2+)-requiring)</fullName>
        <shortName evidence="1">ARD'</shortName>
        <shortName evidence="1">Fe-ARD</shortName>
        <ecNumber evidence="1">1.13.11.54</ecNumber>
    </alternativeName>
    <alternativeName>
        <fullName evidence="1">Acireductone dioxygenase (Ni(2+)-requiring)</fullName>
        <shortName evidence="1">ARD</shortName>
        <shortName evidence="1">Ni-ARD</shortName>
        <ecNumber evidence="1">1.13.11.53</ecNumber>
    </alternativeName>
</protein>
<keyword id="KW-0028">Amino-acid biosynthesis</keyword>
<keyword id="KW-0223">Dioxygenase</keyword>
<keyword id="KW-0408">Iron</keyword>
<keyword id="KW-0479">Metal-binding</keyword>
<keyword id="KW-0486">Methionine biosynthesis</keyword>
<keyword id="KW-0533">Nickel</keyword>
<keyword id="KW-0560">Oxidoreductase</keyword>
<keyword id="KW-1185">Reference proteome</keyword>
<organism>
    <name type="scientific">Gluconacetobacter diazotrophicus (strain ATCC 49037 / DSM 5601 / CCUG 37298 / CIP 103539 / LMG 7603 / PAl5)</name>
    <dbReference type="NCBI Taxonomy" id="272568"/>
    <lineage>
        <taxon>Bacteria</taxon>
        <taxon>Pseudomonadati</taxon>
        <taxon>Pseudomonadota</taxon>
        <taxon>Alphaproteobacteria</taxon>
        <taxon>Acetobacterales</taxon>
        <taxon>Acetobacteraceae</taxon>
        <taxon>Gluconacetobacter</taxon>
    </lineage>
</organism>
<feature type="chain" id="PRO_0000359195" description="Acireductone dioxygenase">
    <location>
        <begin position="1"/>
        <end position="179"/>
    </location>
</feature>
<feature type="binding site" evidence="1">
    <location>
        <position position="97"/>
    </location>
    <ligand>
        <name>Fe(2+)</name>
        <dbReference type="ChEBI" id="CHEBI:29033"/>
    </ligand>
</feature>
<feature type="binding site" evidence="1">
    <location>
        <position position="97"/>
    </location>
    <ligand>
        <name>Ni(2+)</name>
        <dbReference type="ChEBI" id="CHEBI:49786"/>
    </ligand>
</feature>
<feature type="binding site" evidence="1">
    <location>
        <position position="99"/>
    </location>
    <ligand>
        <name>Fe(2+)</name>
        <dbReference type="ChEBI" id="CHEBI:29033"/>
    </ligand>
</feature>
<feature type="binding site" evidence="1">
    <location>
        <position position="99"/>
    </location>
    <ligand>
        <name>Ni(2+)</name>
        <dbReference type="ChEBI" id="CHEBI:49786"/>
    </ligand>
</feature>
<feature type="binding site" evidence="1">
    <location>
        <position position="103"/>
    </location>
    <ligand>
        <name>Fe(2+)</name>
        <dbReference type="ChEBI" id="CHEBI:29033"/>
    </ligand>
</feature>
<feature type="binding site" evidence="1">
    <location>
        <position position="103"/>
    </location>
    <ligand>
        <name>Ni(2+)</name>
        <dbReference type="ChEBI" id="CHEBI:49786"/>
    </ligand>
</feature>
<feature type="binding site" evidence="1">
    <location>
        <position position="141"/>
    </location>
    <ligand>
        <name>Fe(2+)</name>
        <dbReference type="ChEBI" id="CHEBI:29033"/>
    </ligand>
</feature>
<feature type="binding site" evidence="1">
    <location>
        <position position="141"/>
    </location>
    <ligand>
        <name>Ni(2+)</name>
        <dbReference type="ChEBI" id="CHEBI:49786"/>
    </ligand>
</feature>
<feature type="site" description="May play a role in metal incorporation in vivo" evidence="1">
    <location>
        <position position="96"/>
    </location>
</feature>
<feature type="site" description="May play a role in transmitting local conformational changes" evidence="1">
    <location>
        <position position="102"/>
    </location>
</feature>
<feature type="site" description="Important to generate the dianion" evidence="1">
    <location>
        <position position="105"/>
    </location>
</feature>
<dbReference type="EC" id="1.13.11.54" evidence="1"/>
<dbReference type="EC" id="1.13.11.53" evidence="1"/>
<dbReference type="EMBL" id="AM889285">
    <property type="protein sequence ID" value="CAP54529.1"/>
    <property type="molecule type" value="Genomic_DNA"/>
</dbReference>
<dbReference type="EMBL" id="CP001189">
    <property type="protein sequence ID" value="ACI51194.1"/>
    <property type="molecule type" value="Genomic_DNA"/>
</dbReference>
<dbReference type="RefSeq" id="WP_012223108.1">
    <property type="nucleotide sequence ID" value="NC_010125.1"/>
</dbReference>
<dbReference type="SMR" id="A9H8G4"/>
<dbReference type="STRING" id="272568.GDI0586"/>
<dbReference type="KEGG" id="gdi:GDI0586"/>
<dbReference type="KEGG" id="gdj:Gdia_1414"/>
<dbReference type="eggNOG" id="COG1791">
    <property type="taxonomic scope" value="Bacteria"/>
</dbReference>
<dbReference type="HOGENOM" id="CLU_125400_0_0_5"/>
<dbReference type="OrthoDB" id="9795636at2"/>
<dbReference type="UniPathway" id="UPA00904">
    <property type="reaction ID" value="UER00878"/>
</dbReference>
<dbReference type="Proteomes" id="UP000001176">
    <property type="component" value="Chromosome"/>
</dbReference>
<dbReference type="GO" id="GO:0010308">
    <property type="term" value="F:acireductone dioxygenase (Ni2+-requiring) activity"/>
    <property type="evidence" value="ECO:0007669"/>
    <property type="project" value="UniProtKB-UniRule"/>
</dbReference>
<dbReference type="GO" id="GO:0010309">
    <property type="term" value="F:acireductone dioxygenase [iron(II)-requiring] activity"/>
    <property type="evidence" value="ECO:0007669"/>
    <property type="project" value="UniProtKB-UniRule"/>
</dbReference>
<dbReference type="GO" id="GO:0005506">
    <property type="term" value="F:iron ion binding"/>
    <property type="evidence" value="ECO:0007669"/>
    <property type="project" value="UniProtKB-UniRule"/>
</dbReference>
<dbReference type="GO" id="GO:0016151">
    <property type="term" value="F:nickel cation binding"/>
    <property type="evidence" value="ECO:0007669"/>
    <property type="project" value="UniProtKB-UniRule"/>
</dbReference>
<dbReference type="GO" id="GO:0019509">
    <property type="term" value="P:L-methionine salvage from methylthioadenosine"/>
    <property type="evidence" value="ECO:0007669"/>
    <property type="project" value="UniProtKB-UniRule"/>
</dbReference>
<dbReference type="GO" id="GO:0019284">
    <property type="term" value="P:L-methionine salvage from S-adenosylmethionine"/>
    <property type="evidence" value="ECO:0007669"/>
    <property type="project" value="InterPro"/>
</dbReference>
<dbReference type="CDD" id="cd02232">
    <property type="entry name" value="cupin_ARD"/>
    <property type="match status" value="1"/>
</dbReference>
<dbReference type="Gene3D" id="2.60.120.10">
    <property type="entry name" value="Jelly Rolls"/>
    <property type="match status" value="1"/>
</dbReference>
<dbReference type="HAMAP" id="MF_01682">
    <property type="entry name" value="Salvage_MtnD"/>
    <property type="match status" value="1"/>
</dbReference>
<dbReference type="InterPro" id="IPR004313">
    <property type="entry name" value="ARD"/>
</dbReference>
<dbReference type="InterPro" id="IPR023956">
    <property type="entry name" value="ARD_bac"/>
</dbReference>
<dbReference type="InterPro" id="IPR014710">
    <property type="entry name" value="RmlC-like_jellyroll"/>
</dbReference>
<dbReference type="InterPro" id="IPR011051">
    <property type="entry name" value="RmlC_Cupin_sf"/>
</dbReference>
<dbReference type="PANTHER" id="PTHR23418">
    <property type="entry name" value="ACIREDUCTONE DIOXYGENASE"/>
    <property type="match status" value="1"/>
</dbReference>
<dbReference type="PANTHER" id="PTHR23418:SF0">
    <property type="entry name" value="ACIREDUCTONE DIOXYGENASE"/>
    <property type="match status" value="1"/>
</dbReference>
<dbReference type="Pfam" id="PF03079">
    <property type="entry name" value="ARD"/>
    <property type="match status" value="1"/>
</dbReference>
<dbReference type="SUPFAM" id="SSF51182">
    <property type="entry name" value="RmlC-like cupins"/>
    <property type="match status" value="1"/>
</dbReference>